<dbReference type="EMBL" id="BX842652">
    <property type="protein sequence ID" value="CAE80294.1"/>
    <property type="molecule type" value="Genomic_DNA"/>
</dbReference>
<dbReference type="RefSeq" id="WP_011164897.1">
    <property type="nucleotide sequence ID" value="NC_005363.1"/>
</dbReference>
<dbReference type="SMR" id="Q6MKB4"/>
<dbReference type="STRING" id="264462.Bd2491"/>
<dbReference type="GeneID" id="93013398"/>
<dbReference type="KEGG" id="bba:Bd2491"/>
<dbReference type="eggNOG" id="COG0231">
    <property type="taxonomic scope" value="Bacteria"/>
</dbReference>
<dbReference type="HOGENOM" id="CLU_074944_0_1_7"/>
<dbReference type="UniPathway" id="UPA00345"/>
<dbReference type="Proteomes" id="UP000008080">
    <property type="component" value="Chromosome"/>
</dbReference>
<dbReference type="GO" id="GO:0005737">
    <property type="term" value="C:cytoplasm"/>
    <property type="evidence" value="ECO:0007669"/>
    <property type="project" value="UniProtKB-SubCell"/>
</dbReference>
<dbReference type="GO" id="GO:0003746">
    <property type="term" value="F:translation elongation factor activity"/>
    <property type="evidence" value="ECO:0007669"/>
    <property type="project" value="UniProtKB-UniRule"/>
</dbReference>
<dbReference type="GO" id="GO:0043043">
    <property type="term" value="P:peptide biosynthetic process"/>
    <property type="evidence" value="ECO:0007669"/>
    <property type="project" value="InterPro"/>
</dbReference>
<dbReference type="CDD" id="cd04470">
    <property type="entry name" value="S1_EF-P_repeat_1"/>
    <property type="match status" value="1"/>
</dbReference>
<dbReference type="CDD" id="cd05794">
    <property type="entry name" value="S1_EF-P_repeat_2"/>
    <property type="match status" value="1"/>
</dbReference>
<dbReference type="FunFam" id="2.30.30.30:FF:000003">
    <property type="entry name" value="Elongation factor P"/>
    <property type="match status" value="1"/>
</dbReference>
<dbReference type="FunFam" id="2.40.50.140:FF:000004">
    <property type="entry name" value="Elongation factor P"/>
    <property type="match status" value="1"/>
</dbReference>
<dbReference type="FunFam" id="2.40.50.140:FF:000009">
    <property type="entry name" value="Elongation factor P"/>
    <property type="match status" value="1"/>
</dbReference>
<dbReference type="Gene3D" id="2.30.30.30">
    <property type="match status" value="1"/>
</dbReference>
<dbReference type="Gene3D" id="2.40.50.140">
    <property type="entry name" value="Nucleic acid-binding proteins"/>
    <property type="match status" value="2"/>
</dbReference>
<dbReference type="HAMAP" id="MF_00141">
    <property type="entry name" value="EF_P"/>
    <property type="match status" value="1"/>
</dbReference>
<dbReference type="InterPro" id="IPR015365">
    <property type="entry name" value="Elong-fact-P_C"/>
</dbReference>
<dbReference type="InterPro" id="IPR012340">
    <property type="entry name" value="NA-bd_OB-fold"/>
</dbReference>
<dbReference type="InterPro" id="IPR014722">
    <property type="entry name" value="Rib_uL2_dom2"/>
</dbReference>
<dbReference type="InterPro" id="IPR020599">
    <property type="entry name" value="Transl_elong_fac_P/YeiP"/>
</dbReference>
<dbReference type="InterPro" id="IPR013185">
    <property type="entry name" value="Transl_elong_KOW-like"/>
</dbReference>
<dbReference type="InterPro" id="IPR001059">
    <property type="entry name" value="Transl_elong_P/YeiP_cen"/>
</dbReference>
<dbReference type="InterPro" id="IPR013852">
    <property type="entry name" value="Transl_elong_P/YeiP_CS"/>
</dbReference>
<dbReference type="InterPro" id="IPR011768">
    <property type="entry name" value="Transl_elongation_fac_P"/>
</dbReference>
<dbReference type="InterPro" id="IPR008991">
    <property type="entry name" value="Translation_prot_SH3-like_sf"/>
</dbReference>
<dbReference type="NCBIfam" id="TIGR00038">
    <property type="entry name" value="efp"/>
    <property type="match status" value="1"/>
</dbReference>
<dbReference type="NCBIfam" id="NF001810">
    <property type="entry name" value="PRK00529.1"/>
    <property type="match status" value="1"/>
</dbReference>
<dbReference type="PANTHER" id="PTHR30053">
    <property type="entry name" value="ELONGATION FACTOR P"/>
    <property type="match status" value="1"/>
</dbReference>
<dbReference type="PANTHER" id="PTHR30053:SF12">
    <property type="entry name" value="ELONGATION FACTOR P (EF-P) FAMILY PROTEIN"/>
    <property type="match status" value="1"/>
</dbReference>
<dbReference type="Pfam" id="PF01132">
    <property type="entry name" value="EFP"/>
    <property type="match status" value="1"/>
</dbReference>
<dbReference type="Pfam" id="PF08207">
    <property type="entry name" value="EFP_N"/>
    <property type="match status" value="1"/>
</dbReference>
<dbReference type="Pfam" id="PF09285">
    <property type="entry name" value="Elong-fact-P_C"/>
    <property type="match status" value="1"/>
</dbReference>
<dbReference type="PIRSF" id="PIRSF005901">
    <property type="entry name" value="EF-P"/>
    <property type="match status" value="1"/>
</dbReference>
<dbReference type="SMART" id="SM01185">
    <property type="entry name" value="EFP"/>
    <property type="match status" value="1"/>
</dbReference>
<dbReference type="SMART" id="SM00841">
    <property type="entry name" value="Elong-fact-P_C"/>
    <property type="match status" value="1"/>
</dbReference>
<dbReference type="SUPFAM" id="SSF50249">
    <property type="entry name" value="Nucleic acid-binding proteins"/>
    <property type="match status" value="2"/>
</dbReference>
<dbReference type="SUPFAM" id="SSF50104">
    <property type="entry name" value="Translation proteins SH3-like domain"/>
    <property type="match status" value="1"/>
</dbReference>
<dbReference type="PROSITE" id="PS01275">
    <property type="entry name" value="EFP"/>
    <property type="match status" value="1"/>
</dbReference>
<comment type="function">
    <text evidence="1">Involved in peptide bond synthesis. Stimulates efficient translation and peptide-bond synthesis on native or reconstituted 70S ribosomes in vitro. Probably functions indirectly by altering the affinity of the ribosome for aminoacyl-tRNA, thus increasing their reactivity as acceptors for peptidyl transferase.</text>
</comment>
<comment type="pathway">
    <text evidence="1">Protein biosynthesis; polypeptide chain elongation.</text>
</comment>
<comment type="subcellular location">
    <subcellularLocation>
        <location evidence="1">Cytoplasm</location>
    </subcellularLocation>
</comment>
<comment type="similarity">
    <text evidence="1">Belongs to the elongation factor P family.</text>
</comment>
<accession>Q6MKB4</accession>
<protein>
    <recommendedName>
        <fullName evidence="1">Elongation factor P</fullName>
        <shortName evidence="1">EF-P</shortName>
    </recommendedName>
</protein>
<evidence type="ECO:0000255" key="1">
    <source>
        <dbReference type="HAMAP-Rule" id="MF_00141"/>
    </source>
</evidence>
<proteinExistence type="inferred from homology"/>
<sequence>MYETSDFRKGLKIMLEGKPYVIVDFQHVKPGKGNQFTRTKLRNMLTGQNLESTFKSGEKFEVPNVENKEMSFLYKDDTGYNFMSQETFEQIAMSEEDLGEAKYYLTENLKVVILFYNEKAVACDVPKAVNLTVAQTDPGIKGDRVTGATKPATMETGLTVGVPLHINEGDVLRIDTSTGEYVERVSQK</sequence>
<gene>
    <name evidence="1" type="primary">efp</name>
    <name type="ordered locus">Bd2491</name>
</gene>
<reference key="1">
    <citation type="journal article" date="2004" name="Science">
        <title>A predator unmasked: life cycle of Bdellovibrio bacteriovorus from a genomic perspective.</title>
        <authorList>
            <person name="Rendulic S."/>
            <person name="Jagtap P."/>
            <person name="Rosinus A."/>
            <person name="Eppinger M."/>
            <person name="Baar C."/>
            <person name="Lanz C."/>
            <person name="Keller H."/>
            <person name="Lambert C."/>
            <person name="Evans K.J."/>
            <person name="Goesmann A."/>
            <person name="Meyer F."/>
            <person name="Sockett R.E."/>
            <person name="Schuster S.C."/>
        </authorList>
    </citation>
    <scope>NUCLEOTIDE SEQUENCE [LARGE SCALE GENOMIC DNA]</scope>
    <source>
        <strain>ATCC 15356 / DSM 50701 / NCIMB 9529 / HD100</strain>
    </source>
</reference>
<name>EFP_BDEBA</name>
<organism>
    <name type="scientific">Bdellovibrio bacteriovorus (strain ATCC 15356 / DSM 50701 / NCIMB 9529 / HD100)</name>
    <dbReference type="NCBI Taxonomy" id="264462"/>
    <lineage>
        <taxon>Bacteria</taxon>
        <taxon>Pseudomonadati</taxon>
        <taxon>Bdellovibrionota</taxon>
        <taxon>Bdellovibrionia</taxon>
        <taxon>Bdellovibrionales</taxon>
        <taxon>Pseudobdellovibrionaceae</taxon>
        <taxon>Bdellovibrio</taxon>
    </lineage>
</organism>
<keyword id="KW-0963">Cytoplasm</keyword>
<keyword id="KW-0251">Elongation factor</keyword>
<keyword id="KW-0648">Protein biosynthesis</keyword>
<keyword id="KW-1185">Reference proteome</keyword>
<feature type="chain" id="PRO_0000094203" description="Elongation factor P">
    <location>
        <begin position="1"/>
        <end position="188"/>
    </location>
</feature>